<accession>Q96Y66</accession>
<evidence type="ECO:0000250" key="1">
    <source>
        <dbReference type="UniProtKB" id="P72578"/>
    </source>
</evidence>
<evidence type="ECO:0000250" key="2">
    <source>
        <dbReference type="UniProtKB" id="Q96XT2"/>
    </source>
</evidence>
<evidence type="ECO:0000269" key="3">
    <source>
    </source>
</evidence>
<evidence type="ECO:0000269" key="4">
    <source>
    </source>
</evidence>
<evidence type="ECO:0000303" key="5">
    <source>
    </source>
</evidence>
<evidence type="ECO:0000305" key="6">
    <source>
    </source>
</evidence>
<evidence type="ECO:0000312" key="7">
    <source>
        <dbReference type="EMBL" id="BAB67411.1"/>
    </source>
</evidence>
<evidence type="ECO:0000312" key="8">
    <source>
        <dbReference type="Proteomes" id="UP000001015"/>
    </source>
</evidence>
<evidence type="ECO:0007829" key="9">
    <source>
        <dbReference type="PDB" id="5B48"/>
    </source>
</evidence>
<keyword id="KW-0002">3D-structure</keyword>
<keyword id="KW-0560">Oxidoreductase</keyword>
<keyword id="KW-0670">Pyruvate</keyword>
<keyword id="KW-1185">Reference proteome</keyword>
<feature type="chain" id="PRO_0000445531" description="2-oxoacid:ferredoxin oxidoreductase 1, subunit alpha">
    <location>
        <begin position="1"/>
        <end position="627"/>
    </location>
</feature>
<feature type="short sequence motif" description="YPITP motif" evidence="1">
    <location>
        <begin position="253"/>
        <end position="257"/>
    </location>
</feature>
<feature type="binding site" evidence="2">
    <location>
        <position position="256"/>
    </location>
    <ligand>
        <name>substrate</name>
    </ligand>
</feature>
<feature type="binding site" evidence="2">
    <location>
        <position position="344"/>
    </location>
    <ligand>
        <name>substrate</name>
    </ligand>
</feature>
<feature type="mutagenesis site" description="Same oxidoreductase activity as the wild-type." evidence="4">
    <original>S</original>
    <variation>A</variation>
    <location>
        <position position="41"/>
    </location>
</feature>
<feature type="mutagenesis site" description="Same oxidoreductase activity as the wild-type." evidence="4">
    <original>T</original>
    <variation>L</variation>
    <location>
        <position position="349"/>
    </location>
</feature>
<feature type="mutagenesis site" description="Loss of oxidoreductase activity toward 2-oxoglutarate but retains its activity toward pyruvate." evidence="4">
    <original>D</original>
    <variation>A</variation>
    <location>
        <position position="468"/>
    </location>
</feature>
<feature type="strand" evidence="9">
    <location>
        <begin position="3"/>
        <end position="10"/>
    </location>
</feature>
<feature type="helix" evidence="9">
    <location>
        <begin position="17"/>
        <end position="28"/>
    </location>
</feature>
<feature type="strand" evidence="9">
    <location>
        <begin position="32"/>
        <end position="38"/>
    </location>
</feature>
<feature type="strand" evidence="9">
    <location>
        <begin position="43"/>
        <end position="57"/>
    </location>
</feature>
<feature type="strand" evidence="9">
    <location>
        <begin position="64"/>
        <end position="70"/>
    </location>
</feature>
<feature type="strand" evidence="9">
    <location>
        <begin position="72"/>
        <end position="74"/>
    </location>
</feature>
<feature type="helix" evidence="9">
    <location>
        <begin position="75"/>
        <end position="80"/>
    </location>
</feature>
<feature type="helix" evidence="9">
    <location>
        <begin position="81"/>
        <end position="83"/>
    </location>
</feature>
<feature type="strand" evidence="9">
    <location>
        <begin position="84"/>
        <end position="91"/>
    </location>
</feature>
<feature type="helix" evidence="9">
    <location>
        <begin position="92"/>
        <end position="94"/>
    </location>
</feature>
<feature type="strand" evidence="9">
    <location>
        <begin position="103"/>
        <end position="105"/>
    </location>
</feature>
<feature type="helix" evidence="9">
    <location>
        <begin position="107"/>
        <end position="114"/>
    </location>
</feature>
<feature type="strand" evidence="9">
    <location>
        <begin position="115"/>
        <end position="117"/>
    </location>
</feature>
<feature type="turn" evidence="9">
    <location>
        <begin position="118"/>
        <end position="121"/>
    </location>
</feature>
<feature type="helix" evidence="9">
    <location>
        <begin position="126"/>
        <end position="135"/>
    </location>
</feature>
<feature type="strand" evidence="9">
    <location>
        <begin position="139"/>
        <end position="143"/>
    </location>
</feature>
<feature type="helix" evidence="9">
    <location>
        <begin position="145"/>
        <end position="151"/>
    </location>
</feature>
<feature type="helix" evidence="9">
    <location>
        <begin position="169"/>
        <end position="177"/>
    </location>
</feature>
<feature type="turn" evidence="9">
    <location>
        <begin position="178"/>
        <end position="180"/>
    </location>
</feature>
<feature type="helix" evidence="9">
    <location>
        <begin position="183"/>
        <end position="191"/>
    </location>
</feature>
<feature type="helix" evidence="9">
    <location>
        <begin position="207"/>
        <end position="210"/>
    </location>
</feature>
<feature type="strand" evidence="9">
    <location>
        <begin position="229"/>
        <end position="233"/>
    </location>
</feature>
<feature type="helix" evidence="9">
    <location>
        <begin position="234"/>
        <end position="244"/>
    </location>
</feature>
<feature type="strand" evidence="9">
    <location>
        <begin position="247"/>
        <end position="252"/>
    </location>
</feature>
<feature type="turn" evidence="9">
    <location>
        <begin position="256"/>
        <end position="260"/>
    </location>
</feature>
<feature type="helix" evidence="9">
    <location>
        <begin position="261"/>
        <end position="267"/>
    </location>
</feature>
<feature type="strand" evidence="9">
    <location>
        <begin position="270"/>
        <end position="274"/>
    </location>
</feature>
<feature type="turn" evidence="9">
    <location>
        <begin position="276"/>
        <end position="278"/>
    </location>
</feature>
<feature type="strand" evidence="9">
    <location>
        <begin position="281"/>
        <end position="285"/>
    </location>
</feature>
<feature type="strand" evidence="9">
    <location>
        <begin position="287"/>
        <end position="290"/>
    </location>
</feature>
<feature type="helix" evidence="9">
    <location>
        <begin position="294"/>
        <end position="306"/>
    </location>
</feature>
<feature type="strand" evidence="9">
    <location>
        <begin position="310"/>
        <end position="316"/>
    </location>
</feature>
<feature type="helix" evidence="9">
    <location>
        <begin position="317"/>
        <end position="332"/>
    </location>
</feature>
<feature type="strand" evidence="9">
    <location>
        <begin position="337"/>
        <end position="345"/>
    </location>
</feature>
<feature type="strand" evidence="9">
    <location>
        <begin position="350"/>
        <end position="355"/>
    </location>
</feature>
<feature type="helix" evidence="9">
    <location>
        <begin position="361"/>
        <end position="365"/>
    </location>
</feature>
<feature type="strand" evidence="9">
    <location>
        <begin position="367"/>
        <end position="369"/>
    </location>
</feature>
<feature type="strand" evidence="9">
    <location>
        <begin position="374"/>
        <end position="377"/>
    </location>
</feature>
<feature type="helix" evidence="9">
    <location>
        <begin position="381"/>
        <end position="398"/>
    </location>
</feature>
<feature type="strand" evidence="9">
    <location>
        <begin position="400"/>
        <end position="407"/>
    </location>
</feature>
<feature type="helix" evidence="9">
    <location>
        <begin position="408"/>
        <end position="412"/>
    </location>
</feature>
<feature type="strand" evidence="9">
    <location>
        <begin position="413"/>
        <end position="418"/>
    </location>
</feature>
<feature type="strand" evidence="9">
    <location>
        <begin position="449"/>
        <end position="451"/>
    </location>
</feature>
<feature type="strand" evidence="9">
    <location>
        <begin position="464"/>
        <end position="468"/>
    </location>
</feature>
<feature type="helix" evidence="9">
    <location>
        <begin position="480"/>
        <end position="500"/>
    </location>
</feature>
<feature type="helix" evidence="9">
    <location>
        <begin position="503"/>
        <end position="506"/>
    </location>
</feature>
<feature type="strand" evidence="9">
    <location>
        <begin position="507"/>
        <end position="511"/>
    </location>
</feature>
<feature type="strand" evidence="9">
    <location>
        <begin position="513"/>
        <end position="515"/>
    </location>
</feature>
<feature type="strand" evidence="9">
    <location>
        <begin position="518"/>
        <end position="521"/>
    </location>
</feature>
<feature type="helix" evidence="9">
    <location>
        <begin position="525"/>
        <end position="533"/>
    </location>
</feature>
<feature type="strand" evidence="9">
    <location>
        <begin position="541"/>
        <end position="545"/>
    </location>
</feature>
<feature type="strand" evidence="9">
    <location>
        <begin position="547"/>
        <end position="549"/>
    </location>
</feature>
<feature type="helix" evidence="9">
    <location>
        <begin position="553"/>
        <end position="559"/>
    </location>
</feature>
<feature type="turn" evidence="9">
    <location>
        <begin position="560"/>
        <end position="562"/>
    </location>
</feature>
<feature type="strand" evidence="9">
    <location>
        <begin position="564"/>
        <end position="571"/>
    </location>
</feature>
<feature type="helix" evidence="9">
    <location>
        <begin position="576"/>
        <end position="585"/>
    </location>
</feature>
<feature type="strand" evidence="9">
    <location>
        <begin position="590"/>
        <end position="594"/>
    </location>
</feature>
<feature type="helix" evidence="9">
    <location>
        <begin position="603"/>
        <end position="614"/>
    </location>
</feature>
<feature type="strand" evidence="9">
    <location>
        <begin position="619"/>
        <end position="622"/>
    </location>
</feature>
<comment type="function">
    <text evidence="3 4">Catalyzes the coenzyme A-dependent oxidative decarboxylation of different 2-oxoacids such as 2-oxoglutarate, pyruvate and 2-oxobutyrate to form their CoA derivatives.</text>
</comment>
<comment type="catalytic activity">
    <reaction evidence="4 6">
        <text>a 2-oxocarboxylate + 2 oxidized [2Fe-2S]-[ferredoxin] + CoA = an acyl-CoA + 2 reduced [2Fe-2S]-[ferredoxin] + CO2 + H(+)</text>
        <dbReference type="Rhea" id="RHEA:42316"/>
        <dbReference type="Rhea" id="RHEA-COMP:10000"/>
        <dbReference type="Rhea" id="RHEA-COMP:10001"/>
        <dbReference type="ChEBI" id="CHEBI:15378"/>
        <dbReference type="ChEBI" id="CHEBI:16526"/>
        <dbReference type="ChEBI" id="CHEBI:33737"/>
        <dbReference type="ChEBI" id="CHEBI:33738"/>
        <dbReference type="ChEBI" id="CHEBI:35179"/>
        <dbReference type="ChEBI" id="CHEBI:57287"/>
        <dbReference type="ChEBI" id="CHEBI:58342"/>
        <dbReference type="EC" id="1.2.7.11"/>
    </reaction>
</comment>
<comment type="activity regulation">
    <text evidence="3">Inhibited by low concentration of 4-fluoro-7-nitrobenzofurazan (NBD-F).</text>
</comment>
<comment type="biophysicochemical properties">
    <kinetics>
        <KM evidence="4">0.32 mM for pyruvate</KM>
        <KM evidence="4">2.1 mM for 2-oxoglutarate</KM>
        <Vmax evidence="4">7.5 umol/min/mg enzyme with pyruvate as substrate</Vmax>
        <Vmax evidence="4">2.7 umol/min/mg enzyme with 2-oxoglutarate as substrate</Vmax>
    </kinetics>
</comment>
<comment type="subunit">
    <text evidence="4">Heterodimer composed of an alpha and a beta subunit.</text>
</comment>
<comment type="domain">
    <text evidence="1">The Tyr-Pro-Ile-Thr-Pro (YPITP) motif is important for the turnover of the reaction, presumably through its flexibility and mobility.</text>
</comment>
<protein>
    <recommendedName>
        <fullName evidence="5">2-oxoacid:ferredoxin oxidoreductase 1, subunit alpha</fullName>
        <shortName evidence="5">OFOR1</shortName>
        <ecNumber evidence="4 6">1.2.7.11</ecNumber>
    </recommendedName>
</protein>
<proteinExistence type="evidence at protein level"/>
<dbReference type="EC" id="1.2.7.11" evidence="4 6"/>
<dbReference type="EMBL" id="BA000023">
    <property type="protein sequence ID" value="BAB67411.1"/>
    <property type="molecule type" value="Genomic_DNA"/>
</dbReference>
<dbReference type="RefSeq" id="WP_010980386.1">
    <property type="nucleotide sequence ID" value="NC_003106.2"/>
</dbReference>
<dbReference type="PDB" id="5B48">
    <property type="method" value="X-ray"/>
    <property type="resolution" value="2.50 A"/>
    <property type="chains" value="A/C=1-627"/>
</dbReference>
<dbReference type="PDBsum" id="5B48"/>
<dbReference type="SMR" id="Q96Y66"/>
<dbReference type="STRING" id="273063.STK_23000"/>
<dbReference type="GeneID" id="1460384"/>
<dbReference type="KEGG" id="sto:STK_23000"/>
<dbReference type="PATRIC" id="fig|273063.9.peg.2606"/>
<dbReference type="eggNOG" id="arCOG01606">
    <property type="taxonomic scope" value="Archaea"/>
</dbReference>
<dbReference type="OrthoDB" id="31112at2157"/>
<dbReference type="BRENDA" id="1.2.7.11">
    <property type="organism ID" value="15396"/>
</dbReference>
<dbReference type="Proteomes" id="UP000001015">
    <property type="component" value="Chromosome"/>
</dbReference>
<dbReference type="GO" id="GO:0018491">
    <property type="term" value="F:2-oxobutyrate synthase activity"/>
    <property type="evidence" value="ECO:0000314"/>
    <property type="project" value="UniProtKB"/>
</dbReference>
<dbReference type="GO" id="GO:0047553">
    <property type="term" value="F:2-oxoglutarate synthase activity"/>
    <property type="evidence" value="ECO:0000314"/>
    <property type="project" value="UniProtKB"/>
</dbReference>
<dbReference type="GO" id="GO:0019164">
    <property type="term" value="F:pyruvate synthase activity"/>
    <property type="evidence" value="ECO:0000314"/>
    <property type="project" value="UniProtKB"/>
</dbReference>
<dbReference type="GO" id="GO:0006979">
    <property type="term" value="P:response to oxidative stress"/>
    <property type="evidence" value="ECO:0007669"/>
    <property type="project" value="TreeGrafter"/>
</dbReference>
<dbReference type="CDD" id="cd07034">
    <property type="entry name" value="TPP_PYR_PFOR_IOR-alpha_like"/>
    <property type="match status" value="1"/>
</dbReference>
<dbReference type="FunFam" id="3.40.50.970:FF:000022">
    <property type="entry name" value="2-oxoglutarate ferredoxin oxidoreductase alpha subunit"/>
    <property type="match status" value="1"/>
</dbReference>
<dbReference type="FunFam" id="3.40.50.920:FF:000009">
    <property type="entry name" value="2-oxoglutarate ferredoxin oxidoreductase subunit alpha"/>
    <property type="match status" value="1"/>
</dbReference>
<dbReference type="Gene3D" id="3.40.50.920">
    <property type="match status" value="1"/>
</dbReference>
<dbReference type="Gene3D" id="3.40.50.970">
    <property type="match status" value="1"/>
</dbReference>
<dbReference type="Gene3D" id="3.40.920.10">
    <property type="entry name" value="Pyruvate-ferredoxin oxidoreductase, PFOR, domain III"/>
    <property type="match status" value="1"/>
</dbReference>
<dbReference type="InterPro" id="IPR022367">
    <property type="entry name" value="2-oxoacid/accept_OxRdtase_asu"/>
</dbReference>
<dbReference type="InterPro" id="IPR053400">
    <property type="entry name" value="2-oxoacid_Fdx_oxidoreductase"/>
</dbReference>
<dbReference type="InterPro" id="IPR050722">
    <property type="entry name" value="Pyruvate:ferred/Flavod_OxRd"/>
</dbReference>
<dbReference type="InterPro" id="IPR019752">
    <property type="entry name" value="Pyrv/ketoisovalerate_OxRed_cat"/>
</dbReference>
<dbReference type="InterPro" id="IPR002880">
    <property type="entry name" value="Pyrv_Fd/Flavodoxin_OxRdtase_N"/>
</dbReference>
<dbReference type="InterPro" id="IPR002869">
    <property type="entry name" value="Pyrv_flavodox_OxRed_cen"/>
</dbReference>
<dbReference type="InterPro" id="IPR029061">
    <property type="entry name" value="THDP-binding"/>
</dbReference>
<dbReference type="InterPro" id="IPR009014">
    <property type="entry name" value="Transketo_C/PFOR_II"/>
</dbReference>
<dbReference type="NCBIfam" id="TIGR03710">
    <property type="entry name" value="OAFO_sf"/>
    <property type="match status" value="1"/>
</dbReference>
<dbReference type="NCBIfam" id="NF041170">
    <property type="entry name" value="Oxoac_fdxalpha_Archa"/>
    <property type="match status" value="1"/>
</dbReference>
<dbReference type="PANTHER" id="PTHR32154:SF16">
    <property type="entry name" value="PYRUVATE FLAVODOXIN_FERREDOXIN OXIDOREDUCTASE DOMAIN PROTEIN"/>
    <property type="match status" value="1"/>
</dbReference>
<dbReference type="PANTHER" id="PTHR32154">
    <property type="entry name" value="PYRUVATE-FLAVODOXIN OXIDOREDUCTASE-RELATED"/>
    <property type="match status" value="1"/>
</dbReference>
<dbReference type="Pfam" id="PF01558">
    <property type="entry name" value="POR"/>
    <property type="match status" value="1"/>
</dbReference>
<dbReference type="Pfam" id="PF01855">
    <property type="entry name" value="POR_N"/>
    <property type="match status" value="1"/>
</dbReference>
<dbReference type="SUPFAM" id="SSF53323">
    <property type="entry name" value="Pyruvate-ferredoxin oxidoreductase, PFOR, domain III"/>
    <property type="match status" value="1"/>
</dbReference>
<dbReference type="SUPFAM" id="SSF52518">
    <property type="entry name" value="Thiamin diphosphate-binding fold (THDP-binding)"/>
    <property type="match status" value="1"/>
</dbReference>
<dbReference type="SUPFAM" id="SSF52922">
    <property type="entry name" value="TK C-terminal domain-like"/>
    <property type="match status" value="1"/>
</dbReference>
<name>OFOA1_SULTO</name>
<sequence>MRLSWVIGGAQGTGIDTAANIFGNAVASAGYYIYGNREYYSNIKGRHSYFSLTISDKRVRSNTQKIDILVSFDAETVFQHFYDVKDILIYNKAVETTKIDAVQSMEPELAERIKDFLTKQGYETTVKGALEYASKNNVTLIPVNYDEIAKKVADEMKVPLSVTERVKNIVGITISYKLLGLDVNYLIEAINSTFKQDLYRKMNELAVKDSYDIVESRYNLKPSSKERRRFWLDGNTAVAIGKIYGGVRFQSYYPITPASDESVYIEAHQDVLMEDPITGDKKKGTIVVVQAEDELAAINMAIGAALTGVRAATATSGPGFSLMVEGLGWAGMNEVPVVITYYIRGGPSTGLPTRTAQSDLIFPIFAGHGEFPKIVLASGDHAEAFKDAIWALNLAEKYQTPVIHLVEKTLANSYSTIPYEELELDKLKAERGKIVESGDISYKRFKFTEDGISPRAFLGKATMYYTGDEHNEEGHISEDVVNRTMMYEKRMKKLEVADKEIPEESRVKIYGDLNSRNLIITWGSPTGVLRDILEESNFDFTLLQIRMFSPFPKNLVSKLMEGRDKIITVEGNYLAQTSLLVKMYTGKDVTNSILKWNGRPFLRDELEEALIKVIKDGEKRVVLNGGI</sequence>
<organism>
    <name type="scientific">Sulfurisphaera tokodaii (strain DSM 16993 / JCM 10545 / NBRC 100140 / 7)</name>
    <name type="common">Sulfolobus tokodaii</name>
    <dbReference type="NCBI Taxonomy" id="273063"/>
    <lineage>
        <taxon>Archaea</taxon>
        <taxon>Thermoproteota</taxon>
        <taxon>Thermoprotei</taxon>
        <taxon>Sulfolobales</taxon>
        <taxon>Sulfolobaceae</taxon>
        <taxon>Sulfurisphaera</taxon>
    </lineage>
</organism>
<reference key="1">
    <citation type="journal article" date="2001" name="DNA Res.">
        <title>Complete genome sequence of an aerobic thermoacidophilic Crenarchaeon, Sulfolobus tokodaii strain7.</title>
        <authorList>
            <person name="Kawarabayasi Y."/>
            <person name="Hino Y."/>
            <person name="Horikawa H."/>
            <person name="Jin-no K."/>
            <person name="Takahashi M."/>
            <person name="Sekine M."/>
            <person name="Baba S."/>
            <person name="Ankai A."/>
            <person name="Kosugi H."/>
            <person name="Hosoyama A."/>
            <person name="Fukui S."/>
            <person name="Nagai Y."/>
            <person name="Nishijima K."/>
            <person name="Otsuka R."/>
            <person name="Nakazawa H."/>
            <person name="Takamiya M."/>
            <person name="Kato Y."/>
            <person name="Yoshizawa T."/>
            <person name="Tanaka T."/>
            <person name="Kudoh Y."/>
            <person name="Yamazaki J."/>
            <person name="Kushida N."/>
            <person name="Oguchi A."/>
            <person name="Aoki K."/>
            <person name="Masuda S."/>
            <person name="Yanagii M."/>
            <person name="Nishimura M."/>
            <person name="Yamagishi A."/>
            <person name="Oshima T."/>
            <person name="Kikuchi H."/>
        </authorList>
    </citation>
    <scope>NUCLEOTIDE SEQUENCE [LARGE SCALE GENOMIC DNA]</scope>
    <source>
        <strain evidence="8">DSM 16993 / JCM 10545 / NBRC 100140 / 7</strain>
    </source>
</reference>
<reference key="2">
    <citation type="journal article" date="2009" name="Biochim. Biophys. Acta">
        <title>Identification of the lysine residue responsible for coenzyme A binding in the heterodimeric 2-oxoacid:ferredoxin oxidoreductase from Sulfolobus tokodaii, a thermoacidophilic archaeon, using 4-fluoro-7-nitrobenzofurazan as an affinity label.</title>
        <authorList>
            <person name="Luo J."/>
            <person name="Fukuda E."/>
            <person name="Takase H."/>
            <person name="Fushinobu S."/>
            <person name="Shoun H."/>
            <person name="Wakagi T."/>
        </authorList>
    </citation>
    <scope>FUNCTION</scope>
    <scope>CATALYTIC ACTIVITY</scope>
    <scope>ACTIVITY REGULATION</scope>
</reference>
<reference key="3">
    <citation type="journal article" date="2016" name="Sci. Rep.">
        <title>Crystal structures of archaeal 2-oxoacid:ferredoxin oxidoreductases from Sulfolobus tokodaii.</title>
        <authorList>
            <person name="Yan Z."/>
            <person name="Maruyama A."/>
            <person name="Arakawa T."/>
            <person name="Fushinobu S."/>
            <person name="Wakagi T."/>
        </authorList>
    </citation>
    <scope>X-RAY CRYSTALLOGRAPHY (2.50 ANGSTROMS)</scope>
    <scope>FUNCTION</scope>
    <scope>CATALYTIC ACTIVITY</scope>
    <scope>BIOPHYSICOCHEMICAL PROPERTIES</scope>
    <scope>MUTAGENESIS OF SER-41; THR-349 AND ASP-468</scope>
    <scope>SUBUNIT</scope>
    <source>
        <strain>DSM 16993 / JCM 10545 / NBRC 100140 / 7</strain>
    </source>
</reference>
<gene>
    <name evidence="7" type="primary">ST2300</name>
    <name evidence="7" type="ordered locus">STK_23000</name>
</gene>